<keyword id="KW-1185">Reference proteome</keyword>
<keyword id="KW-0687">Ribonucleoprotein</keyword>
<keyword id="KW-0689">Ribosomal protein</keyword>
<keyword id="KW-0694">RNA-binding</keyword>
<keyword id="KW-0699">rRNA-binding</keyword>
<organism>
    <name type="scientific">Desulfitobacterium hafniense (strain Y51)</name>
    <dbReference type="NCBI Taxonomy" id="138119"/>
    <lineage>
        <taxon>Bacteria</taxon>
        <taxon>Bacillati</taxon>
        <taxon>Bacillota</taxon>
        <taxon>Clostridia</taxon>
        <taxon>Eubacteriales</taxon>
        <taxon>Desulfitobacteriaceae</taxon>
        <taxon>Desulfitobacterium</taxon>
    </lineage>
</organism>
<comment type="function">
    <text evidence="1">Binds to the 23S rRNA.</text>
</comment>
<comment type="similarity">
    <text evidence="1">Belongs to the bacterial ribosomal protein bL9 family.</text>
</comment>
<gene>
    <name evidence="1" type="primary">rplI</name>
    <name type="ordered locus">DSY5031</name>
</gene>
<accession>Q24MC2</accession>
<name>RL9_DESHY</name>
<feature type="chain" id="PRO_0000258453" description="Large ribosomal subunit protein bL9">
    <location>
        <begin position="1"/>
        <end position="148"/>
    </location>
</feature>
<evidence type="ECO:0000255" key="1">
    <source>
        <dbReference type="HAMAP-Rule" id="MF_00503"/>
    </source>
</evidence>
<evidence type="ECO:0000305" key="2"/>
<reference key="1">
    <citation type="journal article" date="2006" name="J. Bacteriol.">
        <title>Complete genome sequence of the dehalorespiring bacterium Desulfitobacterium hafniense Y51 and comparison with Dehalococcoides ethenogenes 195.</title>
        <authorList>
            <person name="Nonaka H."/>
            <person name="Keresztes G."/>
            <person name="Shinoda Y."/>
            <person name="Ikenaga Y."/>
            <person name="Abe M."/>
            <person name="Naito K."/>
            <person name="Inatomi K."/>
            <person name="Furukawa K."/>
            <person name="Inui M."/>
            <person name="Yukawa H."/>
        </authorList>
    </citation>
    <scope>NUCLEOTIDE SEQUENCE [LARGE SCALE GENOMIC DNA]</scope>
    <source>
        <strain>Y51</strain>
    </source>
</reference>
<dbReference type="EMBL" id="AP008230">
    <property type="protein sequence ID" value="BAE86820.1"/>
    <property type="molecule type" value="Genomic_DNA"/>
</dbReference>
<dbReference type="RefSeq" id="WP_005815187.1">
    <property type="nucleotide sequence ID" value="NC_007907.1"/>
</dbReference>
<dbReference type="SMR" id="Q24MC2"/>
<dbReference type="STRING" id="138119.DSY5031"/>
<dbReference type="KEGG" id="dsy:DSY5031"/>
<dbReference type="eggNOG" id="COG0359">
    <property type="taxonomic scope" value="Bacteria"/>
</dbReference>
<dbReference type="HOGENOM" id="CLU_078938_3_0_9"/>
<dbReference type="Proteomes" id="UP000001946">
    <property type="component" value="Chromosome"/>
</dbReference>
<dbReference type="GO" id="GO:1990904">
    <property type="term" value="C:ribonucleoprotein complex"/>
    <property type="evidence" value="ECO:0007669"/>
    <property type="project" value="UniProtKB-KW"/>
</dbReference>
<dbReference type="GO" id="GO:0005840">
    <property type="term" value="C:ribosome"/>
    <property type="evidence" value="ECO:0007669"/>
    <property type="project" value="UniProtKB-KW"/>
</dbReference>
<dbReference type="GO" id="GO:0019843">
    <property type="term" value="F:rRNA binding"/>
    <property type="evidence" value="ECO:0007669"/>
    <property type="project" value="UniProtKB-UniRule"/>
</dbReference>
<dbReference type="GO" id="GO:0003735">
    <property type="term" value="F:structural constituent of ribosome"/>
    <property type="evidence" value="ECO:0007669"/>
    <property type="project" value="InterPro"/>
</dbReference>
<dbReference type="GO" id="GO:0006412">
    <property type="term" value="P:translation"/>
    <property type="evidence" value="ECO:0007669"/>
    <property type="project" value="UniProtKB-UniRule"/>
</dbReference>
<dbReference type="FunFam" id="3.10.430.100:FF:000002">
    <property type="entry name" value="50S ribosomal protein L9"/>
    <property type="match status" value="1"/>
</dbReference>
<dbReference type="FunFam" id="3.40.5.10:FF:000002">
    <property type="entry name" value="50S ribosomal protein L9"/>
    <property type="match status" value="1"/>
</dbReference>
<dbReference type="Gene3D" id="3.10.430.100">
    <property type="entry name" value="Ribosomal protein L9, C-terminal domain"/>
    <property type="match status" value="1"/>
</dbReference>
<dbReference type="Gene3D" id="3.40.5.10">
    <property type="entry name" value="Ribosomal protein L9, N-terminal domain"/>
    <property type="match status" value="1"/>
</dbReference>
<dbReference type="HAMAP" id="MF_00503">
    <property type="entry name" value="Ribosomal_bL9"/>
    <property type="match status" value="1"/>
</dbReference>
<dbReference type="InterPro" id="IPR000244">
    <property type="entry name" value="Ribosomal_bL9"/>
</dbReference>
<dbReference type="InterPro" id="IPR009027">
    <property type="entry name" value="Ribosomal_bL9/RNase_H1_N"/>
</dbReference>
<dbReference type="InterPro" id="IPR020594">
    <property type="entry name" value="Ribosomal_bL9_bac/chp"/>
</dbReference>
<dbReference type="InterPro" id="IPR020069">
    <property type="entry name" value="Ribosomal_bL9_C"/>
</dbReference>
<dbReference type="InterPro" id="IPR036791">
    <property type="entry name" value="Ribosomal_bL9_C_sf"/>
</dbReference>
<dbReference type="InterPro" id="IPR020070">
    <property type="entry name" value="Ribosomal_bL9_N"/>
</dbReference>
<dbReference type="InterPro" id="IPR036935">
    <property type="entry name" value="Ribosomal_bL9_N_sf"/>
</dbReference>
<dbReference type="NCBIfam" id="TIGR00158">
    <property type="entry name" value="L9"/>
    <property type="match status" value="1"/>
</dbReference>
<dbReference type="PANTHER" id="PTHR21368">
    <property type="entry name" value="50S RIBOSOMAL PROTEIN L9"/>
    <property type="match status" value="1"/>
</dbReference>
<dbReference type="Pfam" id="PF03948">
    <property type="entry name" value="Ribosomal_L9_C"/>
    <property type="match status" value="1"/>
</dbReference>
<dbReference type="Pfam" id="PF01281">
    <property type="entry name" value="Ribosomal_L9_N"/>
    <property type="match status" value="1"/>
</dbReference>
<dbReference type="SUPFAM" id="SSF55658">
    <property type="entry name" value="L9 N-domain-like"/>
    <property type="match status" value="1"/>
</dbReference>
<dbReference type="SUPFAM" id="SSF55653">
    <property type="entry name" value="Ribosomal protein L9 C-domain"/>
    <property type="match status" value="1"/>
</dbReference>
<dbReference type="PROSITE" id="PS00651">
    <property type="entry name" value="RIBOSOMAL_L9"/>
    <property type="match status" value="1"/>
</dbReference>
<protein>
    <recommendedName>
        <fullName evidence="1">Large ribosomal subunit protein bL9</fullName>
    </recommendedName>
    <alternativeName>
        <fullName evidence="2">50S ribosomal protein L9</fullName>
    </alternativeName>
</protein>
<proteinExistence type="inferred from homology"/>
<sequence length="148" mass="16126">MKVILKADVKALGKKGQVYEVSDGYARNFLFPKGLAVEATSGNLNDLASKKANEEKKKEQEKQEAQTLAAKLSSLSIEIHTKSGEGGRLFGSVTNKEIAEALKASHGINLDRRKLELKEPIKALGTFNVQAKLHPEVTAQFQVHVKAS</sequence>